<organism>
    <name type="scientific">Escherichia coli (strain K12)</name>
    <dbReference type="NCBI Taxonomy" id="83333"/>
    <lineage>
        <taxon>Bacteria</taxon>
        <taxon>Pseudomonadati</taxon>
        <taxon>Pseudomonadota</taxon>
        <taxon>Gammaproteobacteria</taxon>
        <taxon>Enterobacterales</taxon>
        <taxon>Enterobacteriaceae</taxon>
        <taxon>Escherichia</taxon>
    </lineage>
</organism>
<feature type="chain" id="PRO_0000210374" description="L-lactate permease">
    <location>
        <begin position="1"/>
        <end position="551"/>
    </location>
</feature>
<feature type="transmembrane region" description="Helical" evidence="1">
    <location>
        <begin position="13"/>
        <end position="33"/>
    </location>
</feature>
<feature type="transmembrane region" description="Helical" evidence="1">
    <location>
        <begin position="37"/>
        <end position="57"/>
    </location>
</feature>
<feature type="transmembrane region" description="Helical" evidence="1">
    <location>
        <begin position="69"/>
        <end position="89"/>
    </location>
</feature>
<feature type="transmembrane region" description="Helical" evidence="1">
    <location>
        <begin position="131"/>
        <end position="151"/>
    </location>
</feature>
<feature type="transmembrane region" description="Helical" evidence="1">
    <location>
        <begin position="159"/>
        <end position="179"/>
    </location>
</feature>
<feature type="transmembrane region" description="Helical" evidence="1">
    <location>
        <begin position="194"/>
        <end position="214"/>
    </location>
</feature>
<feature type="transmembrane region" description="Helical" evidence="1">
    <location>
        <begin position="220"/>
        <end position="240"/>
    </location>
</feature>
<feature type="transmembrane region" description="Helical" evidence="1">
    <location>
        <begin position="244"/>
        <end position="264"/>
    </location>
</feature>
<feature type="transmembrane region" description="Helical" evidence="1">
    <location>
        <begin position="366"/>
        <end position="386"/>
    </location>
</feature>
<feature type="transmembrane region" description="Helical" evidence="1">
    <location>
        <begin position="405"/>
        <end position="425"/>
    </location>
</feature>
<feature type="transmembrane region" description="Helical" evidence="1">
    <location>
        <begin position="438"/>
        <end position="458"/>
    </location>
</feature>
<feature type="transmembrane region" description="Helical" evidence="1">
    <location>
        <begin position="494"/>
        <end position="514"/>
    </location>
</feature>
<feature type="transmembrane region" description="Helical" evidence="1">
    <location>
        <begin position="530"/>
        <end position="550"/>
    </location>
</feature>
<name>LLDP_ECOLI</name>
<reference key="1">
    <citation type="journal article" date="1993" name="J. Bacteriol.">
        <title>Three overlapping lct genes involved in L-lactate utilization by Escherichia coli.</title>
        <authorList>
            <person name="Dong J.M."/>
            <person name="Taylor J.S."/>
            <person name="Latour D.J."/>
            <person name="Iuchi S."/>
            <person name="Lin E.C.C."/>
        </authorList>
    </citation>
    <scope>NUCLEOTIDE SEQUENCE [GENOMIC DNA]</scope>
    <scope>INDUCTION</scope>
    <source>
        <strain>K12</strain>
    </source>
</reference>
<reference key="2">
    <citation type="journal article" date="1994" name="Nucleic Acids Res.">
        <title>Analysis of the Escherichia coli genome. V. DNA sequence of the region from 76.0 to 81.5 minutes.</title>
        <authorList>
            <person name="Sofia H.J."/>
            <person name="Burland V."/>
            <person name="Daniels D.L."/>
            <person name="Plunkett G. III"/>
            <person name="Blattner F.R."/>
        </authorList>
    </citation>
    <scope>NUCLEOTIDE SEQUENCE [LARGE SCALE GENOMIC DNA]</scope>
    <source>
        <strain>K12 / MG1655 / ATCC 47076</strain>
    </source>
</reference>
<reference key="3">
    <citation type="journal article" date="1997" name="Science">
        <title>The complete genome sequence of Escherichia coli K-12.</title>
        <authorList>
            <person name="Blattner F.R."/>
            <person name="Plunkett G. III"/>
            <person name="Bloch C.A."/>
            <person name="Perna N.T."/>
            <person name="Burland V."/>
            <person name="Riley M."/>
            <person name="Collado-Vides J."/>
            <person name="Glasner J.D."/>
            <person name="Rode C.K."/>
            <person name="Mayhew G.F."/>
            <person name="Gregor J."/>
            <person name="Davis N.W."/>
            <person name="Kirkpatrick H.A."/>
            <person name="Goeden M.A."/>
            <person name="Rose D.J."/>
            <person name="Mau B."/>
            <person name="Shao Y."/>
        </authorList>
    </citation>
    <scope>NUCLEOTIDE SEQUENCE [LARGE SCALE GENOMIC DNA]</scope>
    <source>
        <strain>K12 / MG1655 / ATCC 47076</strain>
    </source>
</reference>
<reference key="4">
    <citation type="journal article" date="2006" name="Mol. Syst. Biol.">
        <title>Highly accurate genome sequences of Escherichia coli K-12 strains MG1655 and W3110.</title>
        <authorList>
            <person name="Hayashi K."/>
            <person name="Morooka N."/>
            <person name="Yamamoto Y."/>
            <person name="Fujita K."/>
            <person name="Isono K."/>
            <person name="Choi S."/>
            <person name="Ohtsubo E."/>
            <person name="Baba T."/>
            <person name="Wanner B.L."/>
            <person name="Mori H."/>
            <person name="Horiuchi T."/>
        </authorList>
    </citation>
    <scope>NUCLEOTIDE SEQUENCE [LARGE SCALE GENOMIC DNA]</scope>
    <source>
        <strain>K12 / W3110 / ATCC 27325 / DSM 5911</strain>
    </source>
</reference>
<reference key="5">
    <citation type="journal article" date="2001" name="Microbiology">
        <title>The gene yghK linked to the glc operon of Escherichia coli encodes a permease for glycolate that is structurally and functionally similar to L-lactate permease.</title>
        <authorList>
            <person name="Nunez M.F."/>
            <person name="Pellicer M.T."/>
            <person name="Badia J."/>
            <person name="Aguilar J."/>
            <person name="Baldoma L."/>
        </authorList>
    </citation>
    <scope>FUNCTION</scope>
    <scope>DISRUPTION PHENOTYPE</scope>
    <source>
        <strain>K12 / MC4100 / ATCC 35695 / DSM 6574</strain>
    </source>
</reference>
<reference key="6">
    <citation type="journal article" date="2002" name="Biochem. Biophys. Res. Commun.">
        <title>Transport of L-lactate, D-lactate, and glycolate by the LldP and GlcA membrane carriers of Escherichia coli.</title>
        <authorList>
            <person name="Nunez M.F."/>
            <person name="Kwon O."/>
            <person name="Wilson T.H."/>
            <person name="Aguilar J."/>
            <person name="Baldoma L."/>
            <person name="Lin E.C.C."/>
        </authorList>
    </citation>
    <scope>FUNCTION</scope>
    <scope>CATALYTIC ACTIVITY</scope>
    <scope>ACTIVITY REGULATION</scope>
    <source>
        <strain>K12 / MC4100 / ATCC 35695 / DSM 6574</strain>
    </source>
</reference>
<reference key="7">
    <citation type="journal article" date="2005" name="Science">
        <title>Global topology analysis of the Escherichia coli inner membrane proteome.</title>
        <authorList>
            <person name="Daley D.O."/>
            <person name="Rapp M."/>
            <person name="Granseth E."/>
            <person name="Melen K."/>
            <person name="Drew D."/>
            <person name="von Heijne G."/>
        </authorList>
    </citation>
    <scope>SUBCELLULAR LOCATION</scope>
    <source>
        <strain>K12 / MG1655 / ATCC 47076</strain>
    </source>
</reference>
<evidence type="ECO:0000255" key="1"/>
<evidence type="ECO:0000269" key="2">
    <source>
    </source>
</evidence>
<evidence type="ECO:0000269" key="3">
    <source>
    </source>
</evidence>
<evidence type="ECO:0000269" key="4">
    <source>
    </source>
</evidence>
<evidence type="ECO:0000269" key="5">
    <source>
    </source>
</evidence>
<evidence type="ECO:0000303" key="6">
    <source>
    </source>
</evidence>
<evidence type="ECO:0000303" key="7">
    <source>
    </source>
</evidence>
<evidence type="ECO:0000305" key="8"/>
<protein>
    <recommendedName>
        <fullName evidence="8">L-lactate permease</fullName>
    </recommendedName>
</protein>
<gene>
    <name evidence="6" type="primary">lldP</name>
    <name evidence="7" type="synonym">lctP</name>
    <name type="ordered locus">b3603</name>
    <name type="ordered locus">JW3578</name>
</gene>
<comment type="function">
    <text evidence="2 3">Uptake of L-lactate across the membrane (PubMed:11283302, PubMed:11785976). Can also transport D-lactate and glycolate (PubMed:11283302, PubMed:11785976). Seems to be driven by a proton motive force (PubMed:11785976).</text>
</comment>
<comment type="catalytic activity">
    <reaction evidence="3">
        <text>(S)-lactate(in) + H(+)(in) = (S)-lactate(out) + H(+)(out)</text>
        <dbReference type="Rhea" id="RHEA:29415"/>
        <dbReference type="ChEBI" id="CHEBI:15378"/>
        <dbReference type="ChEBI" id="CHEBI:16651"/>
    </reaction>
    <physiologicalReaction direction="right-to-left" evidence="3">
        <dbReference type="Rhea" id="RHEA:29417"/>
    </physiologicalReaction>
</comment>
<comment type="catalytic activity">
    <reaction evidence="3">
        <text>(R)-lactate(in) + H(+)(in) = (R)-lactate(out) + H(+)(out)</text>
        <dbReference type="Rhea" id="RHEA:71791"/>
        <dbReference type="ChEBI" id="CHEBI:15378"/>
        <dbReference type="ChEBI" id="CHEBI:16004"/>
    </reaction>
    <physiologicalReaction direction="right-to-left" evidence="3">
        <dbReference type="Rhea" id="RHEA:71793"/>
    </physiologicalReaction>
</comment>
<comment type="catalytic activity">
    <reaction evidence="3">
        <text>glycolate(in) + H(+)(in) = glycolate(out) + H(+)(out)</text>
        <dbReference type="Rhea" id="RHEA:29411"/>
        <dbReference type="ChEBI" id="CHEBI:15378"/>
        <dbReference type="ChEBI" id="CHEBI:29805"/>
    </reaction>
    <physiologicalReaction direction="right-to-left" evidence="3">
        <dbReference type="Rhea" id="RHEA:29413"/>
    </physiologicalReaction>
</comment>
<comment type="activity regulation">
    <text evidence="3">Inhibited by the proton ionophore carbonyl cyanide m-chlorophenylhydrazone (CCCP).</text>
</comment>
<comment type="subcellular location">
    <subcellularLocation>
        <location evidence="4">Cell inner membrane</location>
        <topology evidence="1">Multi-pass membrane protein</topology>
    </subcellularLocation>
</comment>
<comment type="induction">
    <text evidence="5">By L-lactate; aerobically.</text>
</comment>
<comment type="disruption phenotype">
    <text evidence="2">The glcA-lldP double mutant is unable to grow on glycolate and displays undetectable glycolate uptake when grown in the presence of glycolate.</text>
</comment>
<comment type="similarity">
    <text evidence="8">Belongs to the lactate permease family.</text>
</comment>
<accession>P33231</accession>
<accession>Q2M7R7</accession>
<keyword id="KW-0997">Cell inner membrane</keyword>
<keyword id="KW-1003">Cell membrane</keyword>
<keyword id="KW-0472">Membrane</keyword>
<keyword id="KW-1185">Reference proteome</keyword>
<keyword id="KW-0769">Symport</keyword>
<keyword id="KW-0812">Transmembrane</keyword>
<keyword id="KW-1133">Transmembrane helix</keyword>
<keyword id="KW-0813">Transport</keyword>
<proteinExistence type="evidence at protein level"/>
<sequence length="551" mass="59168">MNLWQQNYDPAGNIWLSSLIASLPILFFFFALIKLKLKGYVAASWTVAIALAVALLFYKMPVANALASVVYGFFYGLWPIAWIIIAAVFVYKISVKTGQFDIIRSSILSITPDQRLQMLIVGFCFGAFLEGAAGFGAPVAITAALLVGLGFKPLYAAGLCLIVNTAPVAFGAMGIPILVAGQVTGIDSFEIGQMVGRQLPFMTIIVLFWIMAIMDGWRGIKETWPAVVVAGGSFAIAQYLSSNFIGPELPDIISSLVSLLCLTLFLKRWQPVRVFRFGDLGASQVDMTLAHTGYTAGQVLRAWTPFLFLTATVTLWSIPPFKALFASGGALYEWVINIPVPYLDKLVARMPPVVSEATAYAAVFKFDWFSATGTAILFAALLSIVWLKMKPSDAISTFGSTLKELALPIYSIGMVLAFAFISNYSGLSSTLALALAHTGHAFTFFSPFLGWLGVFLTGSDTSSNALFAALQATAAQQIGVSDLLLVAANTTGGVTGKMISPQSIAIACAAVGLVGKESDLFRFTVKHSLIFTCIVGVITTLQAYVLTWMIP</sequence>
<dbReference type="EMBL" id="L13970">
    <property type="protein sequence ID" value="AAA03583.1"/>
    <property type="molecule type" value="Unassigned_DNA"/>
</dbReference>
<dbReference type="EMBL" id="U00039">
    <property type="protein sequence ID" value="AAB18580.1"/>
    <property type="molecule type" value="Genomic_DNA"/>
</dbReference>
<dbReference type="EMBL" id="U00096">
    <property type="protein sequence ID" value="AAC76627.1"/>
    <property type="molecule type" value="Genomic_DNA"/>
</dbReference>
<dbReference type="EMBL" id="AP009048">
    <property type="protein sequence ID" value="BAE77689.1"/>
    <property type="molecule type" value="Genomic_DNA"/>
</dbReference>
<dbReference type="PIR" id="A49904">
    <property type="entry name" value="A49904"/>
</dbReference>
<dbReference type="RefSeq" id="NP_418060.1">
    <property type="nucleotide sequence ID" value="NC_000913.3"/>
</dbReference>
<dbReference type="RefSeq" id="WP_001295233.1">
    <property type="nucleotide sequence ID" value="NZ_SSZK01000022.1"/>
</dbReference>
<dbReference type="BioGRID" id="4261271">
    <property type="interactions" value="6"/>
</dbReference>
<dbReference type="DIP" id="DIP-10109N"/>
<dbReference type="FunCoup" id="P33231">
    <property type="interactions" value="108"/>
</dbReference>
<dbReference type="IntAct" id="P33231">
    <property type="interactions" value="1"/>
</dbReference>
<dbReference type="STRING" id="511145.b3603"/>
<dbReference type="TCDB" id="2.A.14.1.1">
    <property type="family name" value="the lactate permease (lctp) family"/>
</dbReference>
<dbReference type="jPOST" id="P33231"/>
<dbReference type="PaxDb" id="511145-b3603"/>
<dbReference type="EnsemblBacteria" id="AAC76627">
    <property type="protein sequence ID" value="AAC76627"/>
    <property type="gene ID" value="b3603"/>
</dbReference>
<dbReference type="GeneID" id="948114"/>
<dbReference type="KEGG" id="ecj:JW3578"/>
<dbReference type="KEGG" id="eco:b3603"/>
<dbReference type="KEGG" id="ecoc:C3026_19540"/>
<dbReference type="PATRIC" id="fig|1411691.4.peg.3103"/>
<dbReference type="EchoBASE" id="EB1904"/>
<dbReference type="eggNOG" id="COG1620">
    <property type="taxonomic scope" value="Bacteria"/>
</dbReference>
<dbReference type="HOGENOM" id="CLU_021628_0_0_6"/>
<dbReference type="InParanoid" id="P33231"/>
<dbReference type="OMA" id="VIVLWIQ"/>
<dbReference type="OrthoDB" id="9761056at2"/>
<dbReference type="PhylomeDB" id="P33231"/>
<dbReference type="BioCyc" id="EcoCyc:LCTP-MONOMER"/>
<dbReference type="BioCyc" id="MetaCyc:LCTP-MONOMER"/>
<dbReference type="PRO" id="PR:P33231"/>
<dbReference type="Proteomes" id="UP000000625">
    <property type="component" value="Chromosome"/>
</dbReference>
<dbReference type="GO" id="GO:0005886">
    <property type="term" value="C:plasma membrane"/>
    <property type="evidence" value="ECO:0000314"/>
    <property type="project" value="EcoCyc"/>
</dbReference>
<dbReference type="GO" id="GO:0043879">
    <property type="term" value="F:glycolate transmembrane transporter activity"/>
    <property type="evidence" value="ECO:0000269"/>
    <property type="project" value="EcoCyc"/>
</dbReference>
<dbReference type="GO" id="GO:0015129">
    <property type="term" value="F:lactate transmembrane transporter activity"/>
    <property type="evidence" value="ECO:0000269"/>
    <property type="project" value="EcoCyc"/>
</dbReference>
<dbReference type="GO" id="GO:0015295">
    <property type="term" value="F:solute:proton symporter activity"/>
    <property type="evidence" value="ECO:0000314"/>
    <property type="project" value="EcoCyc"/>
</dbReference>
<dbReference type="GO" id="GO:0006974">
    <property type="term" value="P:DNA damage response"/>
    <property type="evidence" value="ECO:0000270"/>
    <property type="project" value="EcoliWiki"/>
</dbReference>
<dbReference type="GO" id="GO:0035873">
    <property type="term" value="P:lactate transmembrane transport"/>
    <property type="evidence" value="ECO:0000269"/>
    <property type="project" value="EcoCyc"/>
</dbReference>
<dbReference type="InterPro" id="IPR003804">
    <property type="entry name" value="Lactate_perm"/>
</dbReference>
<dbReference type="NCBIfam" id="TIGR00795">
    <property type="entry name" value="lctP"/>
    <property type="match status" value="1"/>
</dbReference>
<dbReference type="NCBIfam" id="NF007740">
    <property type="entry name" value="PRK10420.1"/>
    <property type="match status" value="1"/>
</dbReference>
<dbReference type="PANTHER" id="PTHR30003:SF0">
    <property type="entry name" value="GLYCOLATE PERMEASE GLCA-RELATED"/>
    <property type="match status" value="1"/>
</dbReference>
<dbReference type="PANTHER" id="PTHR30003">
    <property type="entry name" value="L-LACTATE PERMEASE"/>
    <property type="match status" value="1"/>
</dbReference>
<dbReference type="Pfam" id="PF02652">
    <property type="entry name" value="Lactate_perm"/>
    <property type="match status" value="1"/>
</dbReference>